<keyword id="KW-0963">Cytoplasm</keyword>
<keyword id="KW-0255">Endonuclease</keyword>
<keyword id="KW-0378">Hydrolase</keyword>
<keyword id="KW-0464">Manganese</keyword>
<keyword id="KW-0479">Metal-binding</keyword>
<keyword id="KW-0540">Nuclease</keyword>
<evidence type="ECO:0000255" key="1">
    <source>
        <dbReference type="HAMAP-Rule" id="MF_00052"/>
    </source>
</evidence>
<evidence type="ECO:0000255" key="2">
    <source>
        <dbReference type="PROSITE-ProRule" id="PRU01319"/>
    </source>
</evidence>
<protein>
    <recommendedName>
        <fullName evidence="1">Ribonuclease HII</fullName>
        <shortName evidence="1">RNase HII</shortName>
        <ecNumber evidence="1">3.1.26.4</ecNumber>
    </recommendedName>
</protein>
<comment type="function">
    <text evidence="1">Endonuclease that specifically degrades the RNA of RNA-DNA hybrids.</text>
</comment>
<comment type="catalytic activity">
    <reaction evidence="1">
        <text>Endonucleolytic cleavage to 5'-phosphomonoester.</text>
        <dbReference type="EC" id="3.1.26.4"/>
    </reaction>
</comment>
<comment type="cofactor">
    <cofactor evidence="1">
        <name>Mn(2+)</name>
        <dbReference type="ChEBI" id="CHEBI:29035"/>
    </cofactor>
    <cofactor evidence="1">
        <name>Mg(2+)</name>
        <dbReference type="ChEBI" id="CHEBI:18420"/>
    </cofactor>
    <text evidence="1">Manganese or magnesium. Binds 1 divalent metal ion per monomer in the absence of substrate. May bind a second metal ion after substrate binding.</text>
</comment>
<comment type="subcellular location">
    <subcellularLocation>
        <location evidence="1">Cytoplasm</location>
    </subcellularLocation>
</comment>
<comment type="similarity">
    <text evidence="1">Belongs to the RNase HII family.</text>
</comment>
<dbReference type="EC" id="3.1.26.4" evidence="1"/>
<dbReference type="EMBL" id="CP000472">
    <property type="protein sequence ID" value="ACJ30201.1"/>
    <property type="molecule type" value="Genomic_DNA"/>
</dbReference>
<dbReference type="RefSeq" id="WP_020913548.1">
    <property type="nucleotide sequence ID" value="NC_011566.1"/>
</dbReference>
<dbReference type="SMR" id="B8CQ71"/>
<dbReference type="STRING" id="225849.swp_3507"/>
<dbReference type="KEGG" id="swp:swp_3507"/>
<dbReference type="eggNOG" id="COG0164">
    <property type="taxonomic scope" value="Bacteria"/>
</dbReference>
<dbReference type="HOGENOM" id="CLU_036532_3_2_6"/>
<dbReference type="OrthoDB" id="9803420at2"/>
<dbReference type="Proteomes" id="UP000000753">
    <property type="component" value="Chromosome"/>
</dbReference>
<dbReference type="GO" id="GO:0005737">
    <property type="term" value="C:cytoplasm"/>
    <property type="evidence" value="ECO:0007669"/>
    <property type="project" value="UniProtKB-SubCell"/>
</dbReference>
<dbReference type="GO" id="GO:0032299">
    <property type="term" value="C:ribonuclease H2 complex"/>
    <property type="evidence" value="ECO:0007669"/>
    <property type="project" value="TreeGrafter"/>
</dbReference>
<dbReference type="GO" id="GO:0030145">
    <property type="term" value="F:manganese ion binding"/>
    <property type="evidence" value="ECO:0007669"/>
    <property type="project" value="UniProtKB-UniRule"/>
</dbReference>
<dbReference type="GO" id="GO:0003723">
    <property type="term" value="F:RNA binding"/>
    <property type="evidence" value="ECO:0007669"/>
    <property type="project" value="InterPro"/>
</dbReference>
<dbReference type="GO" id="GO:0004523">
    <property type="term" value="F:RNA-DNA hybrid ribonuclease activity"/>
    <property type="evidence" value="ECO:0007669"/>
    <property type="project" value="UniProtKB-UniRule"/>
</dbReference>
<dbReference type="GO" id="GO:0043137">
    <property type="term" value="P:DNA replication, removal of RNA primer"/>
    <property type="evidence" value="ECO:0007669"/>
    <property type="project" value="TreeGrafter"/>
</dbReference>
<dbReference type="GO" id="GO:0006298">
    <property type="term" value="P:mismatch repair"/>
    <property type="evidence" value="ECO:0007669"/>
    <property type="project" value="TreeGrafter"/>
</dbReference>
<dbReference type="CDD" id="cd07182">
    <property type="entry name" value="RNase_HII_bacteria_HII_like"/>
    <property type="match status" value="1"/>
</dbReference>
<dbReference type="FunFam" id="3.30.420.10:FF:000006">
    <property type="entry name" value="Ribonuclease HII"/>
    <property type="match status" value="1"/>
</dbReference>
<dbReference type="Gene3D" id="3.30.420.10">
    <property type="entry name" value="Ribonuclease H-like superfamily/Ribonuclease H"/>
    <property type="match status" value="1"/>
</dbReference>
<dbReference type="HAMAP" id="MF_00052_B">
    <property type="entry name" value="RNase_HII_B"/>
    <property type="match status" value="1"/>
</dbReference>
<dbReference type="InterPro" id="IPR022898">
    <property type="entry name" value="RNase_HII"/>
</dbReference>
<dbReference type="InterPro" id="IPR001352">
    <property type="entry name" value="RNase_HII/HIII"/>
</dbReference>
<dbReference type="InterPro" id="IPR024567">
    <property type="entry name" value="RNase_HII/HIII_dom"/>
</dbReference>
<dbReference type="InterPro" id="IPR012337">
    <property type="entry name" value="RNaseH-like_sf"/>
</dbReference>
<dbReference type="InterPro" id="IPR036397">
    <property type="entry name" value="RNaseH_sf"/>
</dbReference>
<dbReference type="NCBIfam" id="NF000594">
    <property type="entry name" value="PRK00015.1-1"/>
    <property type="match status" value="1"/>
</dbReference>
<dbReference type="NCBIfam" id="NF000595">
    <property type="entry name" value="PRK00015.1-3"/>
    <property type="match status" value="1"/>
</dbReference>
<dbReference type="NCBIfam" id="NF000596">
    <property type="entry name" value="PRK00015.1-4"/>
    <property type="match status" value="1"/>
</dbReference>
<dbReference type="PANTHER" id="PTHR10954">
    <property type="entry name" value="RIBONUCLEASE H2 SUBUNIT A"/>
    <property type="match status" value="1"/>
</dbReference>
<dbReference type="PANTHER" id="PTHR10954:SF18">
    <property type="entry name" value="RIBONUCLEASE HII"/>
    <property type="match status" value="1"/>
</dbReference>
<dbReference type="Pfam" id="PF01351">
    <property type="entry name" value="RNase_HII"/>
    <property type="match status" value="1"/>
</dbReference>
<dbReference type="SUPFAM" id="SSF53098">
    <property type="entry name" value="Ribonuclease H-like"/>
    <property type="match status" value="1"/>
</dbReference>
<dbReference type="PROSITE" id="PS51975">
    <property type="entry name" value="RNASE_H_2"/>
    <property type="match status" value="1"/>
</dbReference>
<sequence length="202" mass="21807">MAVFKGITPEQIDAICVGQYAGVDEVGRGPLIGNVVTAAVILDPHNPIVGLNDSKKLSEKKRELLFNQIQEKALSVSVGAATPAEIDEINILHATMMAMQRAVAGLSIKPTSVLVDGNRCPDFGMQSHAIIKGDGLIDAISAASIVAKVVRDREMEALAAQYPEYGFEKHKGYPTKAHFEALAKYGILAEHRKSFRPVREAM</sequence>
<name>RNH2_SHEPW</name>
<proteinExistence type="inferred from homology"/>
<feature type="chain" id="PRO_1000116850" description="Ribonuclease HII">
    <location>
        <begin position="1"/>
        <end position="202"/>
    </location>
</feature>
<feature type="domain" description="RNase H type-2" evidence="2">
    <location>
        <begin position="18"/>
        <end position="202"/>
    </location>
</feature>
<feature type="binding site" evidence="1">
    <location>
        <position position="24"/>
    </location>
    <ligand>
        <name>a divalent metal cation</name>
        <dbReference type="ChEBI" id="CHEBI:60240"/>
    </ligand>
</feature>
<feature type="binding site" evidence="1">
    <location>
        <position position="25"/>
    </location>
    <ligand>
        <name>a divalent metal cation</name>
        <dbReference type="ChEBI" id="CHEBI:60240"/>
    </ligand>
</feature>
<feature type="binding site" evidence="1">
    <location>
        <position position="116"/>
    </location>
    <ligand>
        <name>a divalent metal cation</name>
        <dbReference type="ChEBI" id="CHEBI:60240"/>
    </ligand>
</feature>
<reference key="1">
    <citation type="journal article" date="2008" name="PLoS ONE">
        <title>Environmental adaptation: genomic analysis of the piezotolerant and psychrotolerant deep-sea iron reducing bacterium Shewanella piezotolerans WP3.</title>
        <authorList>
            <person name="Wang F."/>
            <person name="Wang J."/>
            <person name="Jian H."/>
            <person name="Zhang B."/>
            <person name="Li S."/>
            <person name="Wang F."/>
            <person name="Zeng X."/>
            <person name="Gao L."/>
            <person name="Bartlett D.H."/>
            <person name="Yu J."/>
            <person name="Hu S."/>
            <person name="Xiao X."/>
        </authorList>
    </citation>
    <scope>NUCLEOTIDE SEQUENCE [LARGE SCALE GENOMIC DNA]</scope>
    <source>
        <strain>WP3 / JCM 13877</strain>
    </source>
</reference>
<accession>B8CQ71</accession>
<gene>
    <name evidence="1" type="primary">rnhB</name>
    <name type="ordered locus">swp_3507</name>
</gene>
<organism>
    <name type="scientific">Shewanella piezotolerans (strain WP3 / JCM 13877)</name>
    <dbReference type="NCBI Taxonomy" id="225849"/>
    <lineage>
        <taxon>Bacteria</taxon>
        <taxon>Pseudomonadati</taxon>
        <taxon>Pseudomonadota</taxon>
        <taxon>Gammaproteobacteria</taxon>
        <taxon>Alteromonadales</taxon>
        <taxon>Shewanellaceae</taxon>
        <taxon>Shewanella</taxon>
    </lineage>
</organism>